<reference key="1">
    <citation type="journal article" date="1992" name="Mol. Gen. Genet.">
        <title>Dual function of a new nuclear gene for oxidative phosphorylation and vegetative growth in yeast.</title>
        <authorList>
            <person name="Lisowsky T."/>
        </authorList>
    </citation>
    <scope>NUCLEOTIDE SEQUENCE [GENOMIC DNA]</scope>
    <source>
        <strain>SC167</strain>
    </source>
</reference>
<reference key="2">
    <citation type="journal article" date="1993" name="J. Biol. Chem.">
        <title>Intramitochondrial protein sorting. Isolation and characterization of the yeast MSP1 gene which belongs to a novel family of putative ATPases.</title>
        <authorList>
            <person name="Nakai M."/>
            <person name="Endo T."/>
            <person name="Hase T."/>
            <person name="Matsubara H."/>
        </authorList>
    </citation>
    <scope>NUCLEOTIDE SEQUENCE [GENOMIC DNA]</scope>
    <source>
        <strain>SF747-19D</strain>
    </source>
</reference>
<reference key="3">
    <citation type="journal article" date="1997" name="Yeast">
        <title>Sequence analysis of 203 kilobases from Saccharomyces cerevisiae chromosome VII.</title>
        <authorList>
            <person name="Rieger M."/>
            <person name="Brueckner M."/>
            <person name="Schaefer M."/>
            <person name="Mueller-Auer S."/>
        </authorList>
    </citation>
    <scope>NUCLEOTIDE SEQUENCE [GENOMIC DNA]</scope>
    <source>
        <strain>ATCC 96604 / S288c / FY1679</strain>
    </source>
</reference>
<reference key="4">
    <citation type="journal article" date="1997" name="Nature">
        <title>The nucleotide sequence of Saccharomyces cerevisiae chromosome VII.</title>
        <authorList>
            <person name="Tettelin H."/>
            <person name="Agostoni-Carbone M.L."/>
            <person name="Albermann K."/>
            <person name="Albers M."/>
            <person name="Arroyo J."/>
            <person name="Backes U."/>
            <person name="Barreiros T."/>
            <person name="Bertani I."/>
            <person name="Bjourson A.J."/>
            <person name="Brueckner M."/>
            <person name="Bruschi C.V."/>
            <person name="Carignani G."/>
            <person name="Castagnoli L."/>
            <person name="Cerdan E."/>
            <person name="Clemente M.L."/>
            <person name="Coblenz A."/>
            <person name="Coglievina M."/>
            <person name="Coissac E."/>
            <person name="Defoor E."/>
            <person name="Del Bino S."/>
            <person name="Delius H."/>
            <person name="Delneri D."/>
            <person name="de Wergifosse P."/>
            <person name="Dujon B."/>
            <person name="Durand P."/>
            <person name="Entian K.-D."/>
            <person name="Eraso P."/>
            <person name="Escribano V."/>
            <person name="Fabiani L."/>
            <person name="Fartmann B."/>
            <person name="Feroli F."/>
            <person name="Feuermann M."/>
            <person name="Frontali L."/>
            <person name="Garcia-Gonzalez M."/>
            <person name="Garcia-Saez M.I."/>
            <person name="Goffeau A."/>
            <person name="Guerreiro P."/>
            <person name="Hani J."/>
            <person name="Hansen M."/>
            <person name="Hebling U."/>
            <person name="Hernandez K."/>
            <person name="Heumann K."/>
            <person name="Hilger F."/>
            <person name="Hofmann B."/>
            <person name="Indge K.J."/>
            <person name="James C.M."/>
            <person name="Klima R."/>
            <person name="Koetter P."/>
            <person name="Kramer B."/>
            <person name="Kramer W."/>
            <person name="Lauquin G."/>
            <person name="Leuther H."/>
            <person name="Louis E.J."/>
            <person name="Maillier E."/>
            <person name="Marconi A."/>
            <person name="Martegani E."/>
            <person name="Mazon M.J."/>
            <person name="Mazzoni C."/>
            <person name="McReynolds A.D.K."/>
            <person name="Melchioretto P."/>
            <person name="Mewes H.-W."/>
            <person name="Minenkova O."/>
            <person name="Mueller-Auer S."/>
            <person name="Nawrocki A."/>
            <person name="Netter P."/>
            <person name="Neu R."/>
            <person name="Nombela C."/>
            <person name="Oliver S.G."/>
            <person name="Panzeri L."/>
            <person name="Paoluzi S."/>
            <person name="Plevani P."/>
            <person name="Portetelle D."/>
            <person name="Portillo F."/>
            <person name="Potier S."/>
            <person name="Purnelle B."/>
            <person name="Rieger M."/>
            <person name="Riles L."/>
            <person name="Rinaldi T."/>
            <person name="Robben J."/>
            <person name="Rodrigues-Pousada C."/>
            <person name="Rodriguez-Belmonte E."/>
            <person name="Rodriguez-Torres A.M."/>
            <person name="Rose M."/>
            <person name="Ruzzi M."/>
            <person name="Saliola M."/>
            <person name="Sanchez-Perez M."/>
            <person name="Schaefer B."/>
            <person name="Schaefer M."/>
            <person name="Scharfe M."/>
            <person name="Schmidheini T."/>
            <person name="Schreer A."/>
            <person name="Skala J."/>
            <person name="Souciet J.-L."/>
            <person name="Steensma H.Y."/>
            <person name="Talla E."/>
            <person name="Thierry A."/>
            <person name="Vandenbol M."/>
            <person name="van der Aart Q.J.M."/>
            <person name="Van Dyck L."/>
            <person name="Vanoni M."/>
            <person name="Verhasselt P."/>
            <person name="Voet M."/>
            <person name="Volckaert G."/>
            <person name="Wambutt R."/>
            <person name="Watson M.D."/>
            <person name="Weber N."/>
            <person name="Wedler E."/>
            <person name="Wedler H."/>
            <person name="Wipfli P."/>
            <person name="Wolf K."/>
            <person name="Wright L.F."/>
            <person name="Zaccaria P."/>
            <person name="Zimmermann M."/>
            <person name="Zollner A."/>
            <person name="Kleine K."/>
        </authorList>
    </citation>
    <scope>NUCLEOTIDE SEQUENCE [LARGE SCALE GENOMIC DNA]</scope>
    <source>
        <strain>ATCC 204508 / S288c</strain>
    </source>
</reference>
<reference key="5">
    <citation type="journal article" date="2014" name="G3 (Bethesda)">
        <title>The reference genome sequence of Saccharomyces cerevisiae: Then and now.</title>
        <authorList>
            <person name="Engel S.R."/>
            <person name="Dietrich F.S."/>
            <person name="Fisk D.G."/>
            <person name="Binkley G."/>
            <person name="Balakrishnan R."/>
            <person name="Costanzo M.C."/>
            <person name="Dwight S.S."/>
            <person name="Hitz B.C."/>
            <person name="Karra K."/>
            <person name="Nash R.S."/>
            <person name="Weng S."/>
            <person name="Wong E.D."/>
            <person name="Lloyd P."/>
            <person name="Skrzypek M.S."/>
            <person name="Miyasato S.R."/>
            <person name="Simison M."/>
            <person name="Cherry J.M."/>
        </authorList>
    </citation>
    <scope>GENOME REANNOTATION</scope>
    <source>
        <strain>ATCC 204508 / S288c</strain>
    </source>
</reference>
<reference key="6">
    <citation type="journal article" date="1996" name="Yeast">
        <title>Removal of an intron with unique 3' branch site creates an amino-terminal protein sequence directing the scERV1 gene product to mitochondria.</title>
        <authorList>
            <person name="Lisowsky T."/>
        </authorList>
    </citation>
    <scope>REVISION OF GENE MODEL</scope>
</reference>
<reference key="7">
    <citation type="journal article" date="2000" name="FEBS Lett.">
        <title>Erv1p from Saccharomyces cerevisiae is a FAD-linked sulfhydryl oxidase.</title>
        <authorList>
            <person name="Lee J.-E."/>
            <person name="Hofhaus G."/>
            <person name="Lisowsky T."/>
        </authorList>
    </citation>
    <scope>FUNCTION</scope>
    <scope>FAD-BINDING</scope>
    <scope>CATALYTIC ACTIVITY</scope>
</reference>
<reference key="8">
    <citation type="journal article" date="2003" name="Eur. J. Biochem.">
        <title>The N-terminal cysteine pair of yeast sulfhydryl oxidase Erv1p is essential for in vivo activity and interacts with the primary redox centre.</title>
        <authorList>
            <person name="Hofhaus G."/>
            <person name="Lee J.E."/>
            <person name="Tews I."/>
            <person name="Rosenberg B."/>
            <person name="Lisowsky T."/>
        </authorList>
    </citation>
    <scope>FUNCTION</scope>
    <scope>MUTAGENESIS OF CYS-30; CYS-33; CYS-130; CYS-133; CYS-159 AND CYS-176</scope>
    <scope>SUBUNIT</scope>
</reference>
<reference key="9">
    <citation type="journal article" date="2001" name="EMBO Rep.">
        <title>An essential function of the mitochondrial sulfhydryl oxidase Erv1p/ALR in the maturation of cytosolic Fe/S proteins.</title>
        <authorList>
            <person name="Lange H."/>
            <person name="Lisowsky T."/>
            <person name="Gerber J."/>
            <person name="Muhlenhoff U."/>
            <person name="Kispal G."/>
            <person name="Lill R."/>
        </authorList>
    </citation>
    <scope>FUNCTION</scope>
    <scope>SUBCELLULAR LOCATION</scope>
</reference>
<reference key="10">
    <citation type="journal article" date="2003" name="Proc. Natl. Acad. Sci. U.S.A.">
        <title>The proteome of Saccharomyces cerevisiae mitochondria.</title>
        <authorList>
            <person name="Sickmann A."/>
            <person name="Reinders J."/>
            <person name="Wagner Y."/>
            <person name="Joppich C."/>
            <person name="Zahedi R.P."/>
            <person name="Meyer H.E."/>
            <person name="Schoenfisch B."/>
            <person name="Perschil I."/>
            <person name="Chacinska A."/>
            <person name="Guiard B."/>
            <person name="Rehling P."/>
            <person name="Pfanner N."/>
            <person name="Meisinger C."/>
        </authorList>
    </citation>
    <scope>SUBCELLULAR LOCATION [LARGE SCALE ANALYSIS]</scope>
    <source>
        <strain>ATCC 76625 / YPH499</strain>
    </source>
</reference>
<reference key="11">
    <citation type="journal article" date="2005" name="Cell">
        <title>A disulfide relay system in the intermembrane space of mitochondria that mediates protein import.</title>
        <authorList>
            <person name="Mesecke N."/>
            <person name="Terziyska N."/>
            <person name="Kozany C."/>
            <person name="Baumann F."/>
            <person name="Neupert W."/>
            <person name="Hell K."/>
            <person name="Herrmann J.M."/>
        </authorList>
    </citation>
    <scope>FUNCTION</scope>
    <scope>INTERACTION WITH MIA40</scope>
</reference>
<reference key="12">
    <citation type="journal article" date="2005" name="J. Mol. Biol.">
        <title>The essential mitochondrial protein Erv1 cooperates with Mia40 in biogenesis of intermembrane space proteins.</title>
        <authorList>
            <person name="Rissler M."/>
            <person name="Wiedemann N."/>
            <person name="Pfannschmidt S."/>
            <person name="Gabriel K."/>
            <person name="Guiard B."/>
            <person name="Pfanner N."/>
            <person name="Chacinska A."/>
        </authorList>
    </citation>
    <scope>FUNCTION</scope>
    <scope>INTERACTION WITH MIA40</scope>
</reference>
<reference key="13">
    <citation type="journal article" date="2005" name="J. Mol. Biol.">
        <title>Erv1 mediates the Mia40-dependent protein import pathway and provides a functional link to the respiratory chain by shuttling electrons to cytochrome c.</title>
        <authorList>
            <person name="Allen S."/>
            <person name="Balabanidou V."/>
            <person name="Sideris D.P."/>
            <person name="Lisowsky T."/>
            <person name="Tokatlidis K."/>
        </authorList>
    </citation>
    <scope>FUNCTION</scope>
</reference>
<reference key="14">
    <citation type="journal article" date="2012" name="Mol. Cell. Proteomics">
        <title>Intermembrane space proteome of yeast mitochondria.</title>
        <authorList>
            <person name="Voegtle F.N."/>
            <person name="Burkhart J.M."/>
            <person name="Rao S."/>
            <person name="Gerbeth C."/>
            <person name="Hinrichs J."/>
            <person name="Martinou J.C."/>
            <person name="Chacinska A."/>
            <person name="Sickmann A."/>
            <person name="Zahedi R.P."/>
            <person name="Meisinger C."/>
        </authorList>
    </citation>
    <scope>IDENTIFICATION BY MASS SPECTROMETRY</scope>
    <scope>SUBCELLULAR LOCATION [LARGE SCALE ANALYSIS]</scope>
</reference>
<reference key="15">
    <citation type="journal article" date="2012" name="Proc. Natl. Acad. Sci. U.S.A.">
        <title>N-terminal acetylome analyses and functional insights of the N-terminal acetyltransferase NatB.</title>
        <authorList>
            <person name="Van Damme P."/>
            <person name="Lasa M."/>
            <person name="Polevoda B."/>
            <person name="Gazquez C."/>
            <person name="Elosegui-Artola A."/>
            <person name="Kim D.S."/>
            <person name="De Juan-Pardo E."/>
            <person name="Demeyer K."/>
            <person name="Hole K."/>
            <person name="Larrea E."/>
            <person name="Timmerman E."/>
            <person name="Prieto J."/>
            <person name="Arnesen T."/>
            <person name="Sherman F."/>
            <person name="Gevaert K."/>
            <person name="Aldabe R."/>
        </authorList>
    </citation>
    <scope>IDENTIFICATION BY MASS SPECTROMETRY [LARGE SCALE ANALYSIS]</scope>
</reference>
<feature type="chain" id="PRO_0000001187" description="Mitochondrial FAD-linked sulfhydryl oxidase ERV1">
    <location>
        <begin position="1"/>
        <end position="189"/>
    </location>
</feature>
<feature type="domain" description="ERV/ALR sulfhydryl oxidase" evidence="2">
    <location>
        <begin position="83"/>
        <end position="183"/>
    </location>
</feature>
<feature type="binding site" evidence="1">
    <location>
        <begin position="88"/>
        <end position="95"/>
    </location>
    <ligand>
        <name>FAD</name>
        <dbReference type="ChEBI" id="CHEBI:57692"/>
    </ligand>
</feature>
<feature type="binding site" evidence="1">
    <location>
        <position position="99"/>
    </location>
    <ligand>
        <name>FAD</name>
        <dbReference type="ChEBI" id="CHEBI:57692"/>
    </ligand>
</feature>
<feature type="binding site" evidence="1">
    <location>
        <position position="128"/>
    </location>
    <ligand>
        <name>FAD</name>
        <dbReference type="ChEBI" id="CHEBI:57692"/>
    </ligand>
</feature>
<feature type="binding site" evidence="1">
    <location>
        <begin position="159"/>
        <end position="171"/>
    </location>
    <ligand>
        <name>FAD</name>
        <dbReference type="ChEBI" id="CHEBI:57692"/>
    </ligand>
</feature>
<feature type="binding site" evidence="1">
    <location>
        <begin position="182"/>
        <end position="183"/>
    </location>
    <ligand>
        <name>FAD</name>
        <dbReference type="ChEBI" id="CHEBI:57692"/>
    </ligand>
</feature>
<feature type="disulfide bond" description="Redox-active" evidence="2">
    <location>
        <begin position="130"/>
        <end position="133"/>
    </location>
</feature>
<feature type="disulfide bond" evidence="2">
    <location>
        <begin position="159"/>
        <end position="176"/>
    </location>
</feature>
<feature type="mutagenesis site" description="Reduces catalytic activity 3-fold." evidence="5">
    <original>C</original>
    <variation>S</variation>
    <location>
        <position position="30"/>
    </location>
</feature>
<feature type="mutagenesis site" description="Reduces catalytic activity 2-fold." evidence="5">
    <original>C</original>
    <variation>S</variation>
    <location>
        <position position="33"/>
    </location>
</feature>
<feature type="mutagenesis site" description="Loss of function." evidence="5">
    <original>C</original>
    <variation>S</variation>
    <location>
        <position position="130"/>
    </location>
</feature>
<feature type="mutagenesis site" description="Loss of function." evidence="5">
    <original>C</original>
    <variation>S</variation>
    <location>
        <position position="133"/>
    </location>
</feature>
<feature type="mutagenesis site" description="Reduces catalytic activity 3.3-fold." evidence="5">
    <original>C</original>
    <variation>S</variation>
    <location>
        <position position="159"/>
    </location>
</feature>
<feature type="mutagenesis site" description="Reduces catalytic activity 2.6-fold." evidence="5">
    <original>C</original>
    <variation>S</variation>
    <location>
        <position position="176"/>
    </location>
</feature>
<feature type="strand" evidence="14">
    <location>
        <begin position="16"/>
        <end position="18"/>
    </location>
</feature>
<feature type="strand" evidence="14">
    <location>
        <begin position="26"/>
        <end position="29"/>
    </location>
</feature>
<feature type="helix" evidence="14">
    <location>
        <begin position="36"/>
        <end position="43"/>
    </location>
</feature>
<feature type="turn" evidence="14">
    <location>
        <begin position="44"/>
        <end position="46"/>
    </location>
</feature>
<feature type="helix" evidence="13">
    <location>
        <begin position="87"/>
        <end position="103"/>
    </location>
</feature>
<feature type="helix" evidence="13">
    <location>
        <begin position="111"/>
        <end position="127"/>
    </location>
</feature>
<feature type="helix" evidence="13">
    <location>
        <begin position="131"/>
        <end position="143"/>
    </location>
</feature>
<feature type="helix" evidence="13">
    <location>
        <begin position="151"/>
        <end position="168"/>
    </location>
</feature>
<feature type="helix" evidence="13">
    <location>
        <begin position="176"/>
        <end position="178"/>
    </location>
</feature>
<feature type="helix" evidence="13">
    <location>
        <begin position="179"/>
        <end position="183"/>
    </location>
</feature>
<accession>P27882</accession>
<accession>D6VUG4</accession>
<organism>
    <name type="scientific">Saccharomyces cerevisiae (strain ATCC 204508 / S288c)</name>
    <name type="common">Baker's yeast</name>
    <dbReference type="NCBI Taxonomy" id="559292"/>
    <lineage>
        <taxon>Eukaryota</taxon>
        <taxon>Fungi</taxon>
        <taxon>Dikarya</taxon>
        <taxon>Ascomycota</taxon>
        <taxon>Saccharomycotina</taxon>
        <taxon>Saccharomycetes</taxon>
        <taxon>Saccharomycetales</taxon>
        <taxon>Saccharomycetaceae</taxon>
        <taxon>Saccharomyces</taxon>
    </lineage>
</organism>
<evidence type="ECO:0000250" key="1">
    <source>
        <dbReference type="UniProtKB" id="P55789"/>
    </source>
</evidence>
<evidence type="ECO:0000255" key="2">
    <source>
        <dbReference type="PROSITE-ProRule" id="PRU00654"/>
    </source>
</evidence>
<evidence type="ECO:0000269" key="3">
    <source>
    </source>
</evidence>
<evidence type="ECO:0000269" key="4">
    <source>
    </source>
</evidence>
<evidence type="ECO:0000269" key="5">
    <source>
    </source>
</evidence>
<evidence type="ECO:0000269" key="6">
    <source>
    </source>
</evidence>
<evidence type="ECO:0000269" key="7">
    <source>
    </source>
</evidence>
<evidence type="ECO:0000269" key="8">
    <source>
    </source>
</evidence>
<evidence type="ECO:0000269" key="9">
    <source>
    </source>
</evidence>
<evidence type="ECO:0000269" key="10">
    <source>
    </source>
</evidence>
<evidence type="ECO:0000305" key="11"/>
<evidence type="ECO:0000305" key="12">
    <source>
    </source>
</evidence>
<evidence type="ECO:0007829" key="13">
    <source>
        <dbReference type="PDB" id="3W4Y"/>
    </source>
</evidence>
<evidence type="ECO:0007829" key="14">
    <source>
        <dbReference type="PDB" id="4E0I"/>
    </source>
</evidence>
<name>ERV1_YEAST</name>
<comment type="function">
    <text evidence="2 3 4 5 7 8 9">FAD-dependent sulfhydryl oxidase that catalyzes disulfide bond formation. Required for the import and folding of small cysteine-containing proteins in the mitochondrial intermembrane space (IMS). Forms a redox cycle with MIA40 that involves a disulfide relay system. Important for maintaining the cysteine residues in MIA40 in an oxidized state. Reduced ERV1 is reoxidized by cytochrome c. Required for the maturation of cytoplasmic, but not of mitochondrial Fe/S proteins.</text>
</comment>
<comment type="catalytic activity">
    <reaction evidence="12">
        <text>2 R'C(R)SH + O2 = R'C(R)S-S(R)CR' + H2O2</text>
        <dbReference type="Rhea" id="RHEA:17357"/>
        <dbReference type="ChEBI" id="CHEBI:15379"/>
        <dbReference type="ChEBI" id="CHEBI:16240"/>
        <dbReference type="ChEBI" id="CHEBI:16520"/>
        <dbReference type="ChEBI" id="CHEBI:17412"/>
        <dbReference type="EC" id="1.8.3.2"/>
    </reaction>
    <physiologicalReaction direction="left-to-right" evidence="12">
        <dbReference type="Rhea" id="RHEA:17358"/>
    </physiologicalReaction>
</comment>
<comment type="cofactor">
    <cofactor evidence="2 3">
        <name>FAD</name>
        <dbReference type="ChEBI" id="CHEBI:57692"/>
    </cofactor>
</comment>
<comment type="subunit">
    <text evidence="5 7 8">Homodimer. Interacts with MIA40, forming transient intermolecular disulfide bridges.</text>
</comment>
<comment type="interaction">
    <interactant intactId="EBI-6621">
        <id>P27882</id>
    </interactant>
    <interactant intactId="EBI-26978">
        <id>P36046</id>
        <label>MIA40</label>
    </interactant>
    <organismsDiffer>false</organismsDiffer>
    <experiments>4</experiments>
</comment>
<comment type="subcellular location">
    <subcellularLocation>
        <location evidence="4 6 10">Mitochondrion intermembrane space</location>
    </subcellularLocation>
</comment>
<comment type="sequence caution" evidence="11">
    <conflict type="erroneous gene model prediction">
        <sequence resource="EMBL-CDS" id="AAB48659"/>
    </conflict>
</comment>
<comment type="sequence caution" evidence="11">
    <conflict type="erroneous gene model prediction">
        <sequence resource="EMBL-CDS" id="CAA43129"/>
    </conflict>
</comment>
<comment type="sequence caution" evidence="11">
    <conflict type="erroneous gene model prediction">
        <sequence resource="EMBL-CDS" id="CAA48192"/>
    </conflict>
</comment>
<sequence length="189" mass="21639">MKAIDKMTDNPPQEGLSGRKIIYDEDGKPCRSCNTLLDFQYVTGKISNGLKNLSSNGKLAGTGALTGEASELMPGSRTYRKVDPPDVEQLGRSSWTLLHSVAASYPAQPTDQQKGEMKQFLNIFSHIYPCNWCAKDFEKYIRENAPQVESREELGRWMCEAHNKVNKKLRKPKFDCNFWEKRWKDGWDE</sequence>
<dbReference type="EC" id="1.8.3.2" evidence="12"/>
<dbReference type="EMBL" id="X60722">
    <property type="protein sequence ID" value="CAA43129.1"/>
    <property type="status" value="ALT_SEQ"/>
    <property type="molecule type" value="Genomic_DNA"/>
</dbReference>
<dbReference type="EMBL" id="M74772">
    <property type="protein sequence ID" value="AAB48659.1"/>
    <property type="status" value="ALT_SEQ"/>
    <property type="molecule type" value="Genomic_DNA"/>
</dbReference>
<dbReference type="EMBL" id="X68055">
    <property type="protein sequence ID" value="CAA48192.1"/>
    <property type="status" value="ALT_SEQ"/>
    <property type="molecule type" value="Genomic_DNA"/>
</dbReference>
<dbReference type="EMBL" id="Z72814">
    <property type="protein sequence ID" value="CAA97017.1"/>
    <property type="molecule type" value="Genomic_DNA"/>
</dbReference>
<dbReference type="EMBL" id="Z72813">
    <property type="protein sequence ID" value="CAA97016.1"/>
    <property type="molecule type" value="Genomic_DNA"/>
</dbReference>
<dbReference type="EMBL" id="BK006941">
    <property type="protein sequence ID" value="DAA08125.1"/>
    <property type="molecule type" value="Genomic_DNA"/>
</dbReference>
<dbReference type="PIR" id="S20469">
    <property type="entry name" value="S20469"/>
</dbReference>
<dbReference type="RefSeq" id="NP_011543.4">
    <property type="nucleotide sequence ID" value="NM_001181158.3"/>
</dbReference>
<dbReference type="PDB" id="3W4Y">
    <property type="method" value="X-ray"/>
    <property type="resolution" value="2.00 A"/>
    <property type="chains" value="A/B/C=73-189"/>
</dbReference>
<dbReference type="PDB" id="4E0H">
    <property type="method" value="X-ray"/>
    <property type="resolution" value="2.00 A"/>
    <property type="chains" value="A=86-189"/>
</dbReference>
<dbReference type="PDB" id="4E0I">
    <property type="method" value="X-ray"/>
    <property type="resolution" value="3.00 A"/>
    <property type="chains" value="A/B/C=1-189"/>
</dbReference>
<dbReference type="PDBsum" id="3W4Y"/>
<dbReference type="PDBsum" id="4E0H"/>
<dbReference type="PDBsum" id="4E0I"/>
<dbReference type="SMR" id="P27882"/>
<dbReference type="BioGRID" id="33273">
    <property type="interactions" value="35"/>
</dbReference>
<dbReference type="FunCoup" id="P27882">
    <property type="interactions" value="543"/>
</dbReference>
<dbReference type="IntAct" id="P27882">
    <property type="interactions" value="5"/>
</dbReference>
<dbReference type="MINT" id="P27882"/>
<dbReference type="STRING" id="4932.YGR029W"/>
<dbReference type="CarbonylDB" id="P27882"/>
<dbReference type="PaxDb" id="4932-YGR029W"/>
<dbReference type="PeptideAtlas" id="P27882"/>
<dbReference type="EnsemblFungi" id="YGR029W_mRNA">
    <property type="protein sequence ID" value="YGR029W"/>
    <property type="gene ID" value="YGR029W"/>
</dbReference>
<dbReference type="GeneID" id="852916"/>
<dbReference type="KEGG" id="sce:YGR029W"/>
<dbReference type="AGR" id="SGD:S000003261"/>
<dbReference type="SGD" id="S000003261">
    <property type="gene designation" value="ERV1"/>
</dbReference>
<dbReference type="VEuPathDB" id="FungiDB:YGR029W"/>
<dbReference type="eggNOG" id="KOG3355">
    <property type="taxonomic scope" value="Eukaryota"/>
</dbReference>
<dbReference type="GeneTree" id="ENSGT00390000001979"/>
<dbReference type="HOGENOM" id="CLU_070631_1_0_1"/>
<dbReference type="InParanoid" id="P27882"/>
<dbReference type="OMA" id="PCRTCNT"/>
<dbReference type="OrthoDB" id="17199at2759"/>
<dbReference type="BioCyc" id="YEAST:G3O-30753-MONOMER"/>
<dbReference type="BRENDA" id="1.8.3.2">
    <property type="organism ID" value="984"/>
</dbReference>
<dbReference type="BioGRID-ORCS" id="852916">
    <property type="hits" value="5 hits in 10 CRISPR screens"/>
</dbReference>
<dbReference type="EvolutionaryTrace" id="P27882"/>
<dbReference type="PRO" id="PR:P27882"/>
<dbReference type="Proteomes" id="UP000002311">
    <property type="component" value="Chromosome VII"/>
</dbReference>
<dbReference type="RNAct" id="P27882">
    <property type="molecule type" value="protein"/>
</dbReference>
<dbReference type="GO" id="GO:0005758">
    <property type="term" value="C:mitochondrial intermembrane space"/>
    <property type="evidence" value="ECO:0000314"/>
    <property type="project" value="SGD"/>
</dbReference>
<dbReference type="GO" id="GO:0005739">
    <property type="term" value="C:mitochondrion"/>
    <property type="evidence" value="ECO:0007005"/>
    <property type="project" value="SGD"/>
</dbReference>
<dbReference type="GO" id="GO:0050660">
    <property type="term" value="F:flavin adenine dinucleotide binding"/>
    <property type="evidence" value="ECO:0000318"/>
    <property type="project" value="GO_Central"/>
</dbReference>
<dbReference type="GO" id="GO:0016971">
    <property type="term" value="F:flavin-dependent sulfhydryl oxidase activity"/>
    <property type="evidence" value="ECO:0000314"/>
    <property type="project" value="SGD"/>
</dbReference>
<dbReference type="GO" id="GO:0016972">
    <property type="term" value="F:thiol oxidase activity"/>
    <property type="evidence" value="ECO:0000315"/>
    <property type="project" value="SGD"/>
</dbReference>
<dbReference type="GO" id="GO:0034599">
    <property type="term" value="P:cellular response to oxidative stress"/>
    <property type="evidence" value="ECO:0000315"/>
    <property type="project" value="SGD"/>
</dbReference>
<dbReference type="GO" id="GO:0006879">
    <property type="term" value="P:intracellular iron ion homeostasis"/>
    <property type="evidence" value="ECO:0000314"/>
    <property type="project" value="SGD"/>
</dbReference>
<dbReference type="GO" id="GO:0160203">
    <property type="term" value="P:mitochondrial disulfide relay system"/>
    <property type="evidence" value="ECO:0000315"/>
    <property type="project" value="SGD"/>
</dbReference>
<dbReference type="GO" id="GO:0045041">
    <property type="term" value="P:protein import into mitochondrial intermembrane space"/>
    <property type="evidence" value="ECO:0000315"/>
    <property type="project" value="SGD"/>
</dbReference>
<dbReference type="FunFam" id="1.20.120.310:FF:000003">
    <property type="entry name" value="Sulfhydryl oxidase"/>
    <property type="match status" value="1"/>
</dbReference>
<dbReference type="FunFam" id="4.10.320.60:FF:000001">
    <property type="entry name" value="Sulfhydryl oxidase"/>
    <property type="match status" value="1"/>
</dbReference>
<dbReference type="Gene3D" id="4.10.320.60">
    <property type="match status" value="1"/>
</dbReference>
<dbReference type="Gene3D" id="1.20.120.310">
    <property type="entry name" value="ERV/ALR sulfhydryl oxidase domain"/>
    <property type="match status" value="1"/>
</dbReference>
<dbReference type="InterPro" id="IPR039799">
    <property type="entry name" value="ALR/ERV"/>
</dbReference>
<dbReference type="InterPro" id="IPR036774">
    <property type="entry name" value="ERV/ALR_sulphydryl_oxid_sf"/>
</dbReference>
<dbReference type="InterPro" id="IPR017905">
    <property type="entry name" value="ERV/ALR_sulphydryl_oxidase"/>
</dbReference>
<dbReference type="PANTHER" id="PTHR12645">
    <property type="entry name" value="ALR/ERV"/>
    <property type="match status" value="1"/>
</dbReference>
<dbReference type="PANTHER" id="PTHR12645:SF0">
    <property type="entry name" value="FAD-LINKED SULFHYDRYL OXIDASE ALR"/>
    <property type="match status" value="1"/>
</dbReference>
<dbReference type="Pfam" id="PF04777">
    <property type="entry name" value="Evr1_Alr"/>
    <property type="match status" value="1"/>
</dbReference>
<dbReference type="SUPFAM" id="SSF69000">
    <property type="entry name" value="FAD-dependent thiol oxidase"/>
    <property type="match status" value="1"/>
</dbReference>
<dbReference type="PROSITE" id="PS51324">
    <property type="entry name" value="ERV_ALR"/>
    <property type="match status" value="1"/>
</dbReference>
<keyword id="KW-0002">3D-structure</keyword>
<keyword id="KW-1015">Disulfide bond</keyword>
<keyword id="KW-0274">FAD</keyword>
<keyword id="KW-0285">Flavoprotein</keyword>
<keyword id="KW-0496">Mitochondrion</keyword>
<keyword id="KW-0560">Oxidoreductase</keyword>
<keyword id="KW-1185">Reference proteome</keyword>
<proteinExistence type="evidence at protein level"/>
<protein>
    <recommendedName>
        <fullName>Mitochondrial FAD-linked sulfhydryl oxidase ERV1</fullName>
        <ecNumber evidence="12">1.8.3.2</ecNumber>
    </recommendedName>
    <alternativeName>
        <fullName>14 kDa regulatory protein</fullName>
    </alternativeName>
    <alternativeName>
        <fullName>Essential for respiration and vegetative growth protein 1</fullName>
    </alternativeName>
</protein>
<gene>
    <name type="primary">ERV1</name>
    <name type="ordered locus">YGR029W</name>
</gene>